<sequence>MSLRFIVGRAGSGKSHSCLEEVRQRLRQNQGESSIILLVPEQATFQYEYMLATTPELKGMIWAQVLSFRRLAFRVLQEMGGAARAHIDDLGKKMVLRRILEQRKSELKVFHRAAKQPGFADSLASALSELKLYRIEPQELQKGIQHMQEAPGSAIRDKLADLSLLYNDLEEFLSGRFTDPDDYLNLLAQRLPGSRTVQGAEIFIDGFTGFTPQEYGVIEQMLGTADRVHVALCFDPMYLQEPCDELEFFYPTVETYHTLLDMAGALRISLEPPIICGKETPVRFQKDSAIAHLEKYYFRHPLQASDAAQGVSLVACANRRAEVEAAAREIIRLCREEELSWRDIVVVLRDLTNYSDLINTIFNDHGIPVFIDEKRNVLHHPLVELIRSALEVITQHWAYDPVFRYLKTDLIPVQRDDVDRLENYVLAHGIRGNRWNDNRDWTYRRQYTLGEDCDIDDNEAEQLAQLNVVRYAAIEHINNFSKKVANCGNVRQITTALFELLESLSVAERMEAWAKEAEVAGRLIEAKEHAQIWDNVILLLDEIVEAMGEQELNLEEYLQVLEAGLESLKLGLIPPGLDQVVVGTLERSRNPNVKAALVLGISDGVLPARPVEEGLFSDYEREALREIGLNLAPGARRKLFDEQYLIYTALTRASSRLWLSYPQADDEGKALMPSPVIQRVKELLPLIQEEILPVEPPCLGGDLAFIANPSRSLSYLAAMLRETVAGRLVDPVWQDVYSWFVQQPQYQESCRRVLAGLYHVNQETSLPPSMGRRLYGSRLRASVSRLERFTTCPFSHFLSHGLKLKERSQFKLAAPDLGQFFHAALKLFAERIKALSLDWGQLSRGQIITITGEIVEELAPQLQNEILLSTARHRYLIKKLRRTLERAVVTLAEHARRGSFRPVAVEIGFGDNAELPAVQLDLADHCQMEMAGRIDRIDSACEGGQHYYSLIDYKSGQPDIKLADIVHGLKLQLLTYLDVALRYSKQLTQQEALPAAMLYFSVRDPFVASTGPMTEEEAEKNLLKQLKMKGLLLADPLVISKMDKELSGQSDLLPVGLKKNGDFYSNSRVITEEQFKLLRNYLEFKLKSIGQQMVSGDIAISPYQRGKEKACRYCIFKSVCQFDPLLEDNLFRLLADQEEQVLWSLIKESLGDKHE</sequence>
<proteinExistence type="inferred from homology"/>
<protein>
    <recommendedName>
        <fullName evidence="1">ATP-dependent helicase/deoxyribonuclease subunit B</fullName>
        <ecNumber evidence="1">3.1.-.-</ecNumber>
    </recommendedName>
    <alternativeName>
        <fullName evidence="1">ATP-dependent helicase/nuclease subunit AddB</fullName>
    </alternativeName>
</protein>
<keyword id="KW-0004">4Fe-4S</keyword>
<keyword id="KW-0067">ATP-binding</keyword>
<keyword id="KW-0227">DNA damage</keyword>
<keyword id="KW-0234">DNA repair</keyword>
<keyword id="KW-0238">DNA-binding</keyword>
<keyword id="KW-0269">Exonuclease</keyword>
<keyword id="KW-0347">Helicase</keyword>
<keyword id="KW-0378">Hydrolase</keyword>
<keyword id="KW-0408">Iron</keyword>
<keyword id="KW-0411">Iron-sulfur</keyword>
<keyword id="KW-0479">Metal-binding</keyword>
<keyword id="KW-0540">Nuclease</keyword>
<keyword id="KW-0547">Nucleotide-binding</keyword>
<keyword id="KW-1185">Reference proteome</keyword>
<dbReference type="EC" id="3.1.-.-" evidence="1"/>
<dbReference type="EMBL" id="CP000612">
    <property type="protein sequence ID" value="ABO49945.1"/>
    <property type="molecule type" value="Genomic_DNA"/>
</dbReference>
<dbReference type="RefSeq" id="WP_011877764.1">
    <property type="nucleotide sequence ID" value="NC_009253.1"/>
</dbReference>
<dbReference type="SMR" id="A4J4E2"/>
<dbReference type="STRING" id="349161.Dred_1415"/>
<dbReference type="KEGG" id="drm:Dred_1415"/>
<dbReference type="eggNOG" id="COG3857">
    <property type="taxonomic scope" value="Bacteria"/>
</dbReference>
<dbReference type="HOGENOM" id="CLU_007838_0_0_9"/>
<dbReference type="OrthoDB" id="9758506at2"/>
<dbReference type="Proteomes" id="UP000001556">
    <property type="component" value="Chromosome"/>
</dbReference>
<dbReference type="GO" id="GO:0051539">
    <property type="term" value="F:4 iron, 4 sulfur cluster binding"/>
    <property type="evidence" value="ECO:0007669"/>
    <property type="project" value="UniProtKB-KW"/>
</dbReference>
<dbReference type="GO" id="GO:0008409">
    <property type="term" value="F:5'-3' exonuclease activity"/>
    <property type="evidence" value="ECO:0007669"/>
    <property type="project" value="UniProtKB-UniRule"/>
</dbReference>
<dbReference type="GO" id="GO:0005524">
    <property type="term" value="F:ATP binding"/>
    <property type="evidence" value="ECO:0007669"/>
    <property type="project" value="UniProtKB-UniRule"/>
</dbReference>
<dbReference type="GO" id="GO:0003690">
    <property type="term" value="F:double-stranded DNA binding"/>
    <property type="evidence" value="ECO:0007669"/>
    <property type="project" value="UniProtKB-UniRule"/>
</dbReference>
<dbReference type="GO" id="GO:0004386">
    <property type="term" value="F:helicase activity"/>
    <property type="evidence" value="ECO:0007669"/>
    <property type="project" value="UniProtKB-KW"/>
</dbReference>
<dbReference type="GO" id="GO:0046872">
    <property type="term" value="F:metal ion binding"/>
    <property type="evidence" value="ECO:0007669"/>
    <property type="project" value="UniProtKB-KW"/>
</dbReference>
<dbReference type="GO" id="GO:0000724">
    <property type="term" value="P:double-strand break repair via homologous recombination"/>
    <property type="evidence" value="ECO:0007669"/>
    <property type="project" value="UniProtKB-UniRule"/>
</dbReference>
<dbReference type="Gene3D" id="3.90.320.10">
    <property type="match status" value="1"/>
</dbReference>
<dbReference type="Gene3D" id="6.10.140.1030">
    <property type="match status" value="1"/>
</dbReference>
<dbReference type="Gene3D" id="3.40.50.300">
    <property type="entry name" value="P-loop containing nucleotide triphosphate hydrolases"/>
    <property type="match status" value="4"/>
</dbReference>
<dbReference type="HAMAP" id="MF_01452">
    <property type="entry name" value="AddB_type1"/>
    <property type="match status" value="1"/>
</dbReference>
<dbReference type="InterPro" id="IPR049035">
    <property type="entry name" value="ADDB_N"/>
</dbReference>
<dbReference type="InterPro" id="IPR014140">
    <property type="entry name" value="DNA_helicase_suAddB"/>
</dbReference>
<dbReference type="InterPro" id="IPR014017">
    <property type="entry name" value="DNA_helicase_UvrD-like_C"/>
</dbReference>
<dbReference type="InterPro" id="IPR027417">
    <property type="entry name" value="P-loop_NTPase"/>
</dbReference>
<dbReference type="InterPro" id="IPR011604">
    <property type="entry name" value="PDDEXK-like_dom_sf"/>
</dbReference>
<dbReference type="InterPro" id="IPR038726">
    <property type="entry name" value="PDDEXK_AddAB-type"/>
</dbReference>
<dbReference type="NCBIfam" id="TIGR02773">
    <property type="entry name" value="addB_Gpos"/>
    <property type="match status" value="1"/>
</dbReference>
<dbReference type="PANTHER" id="PTHR30591">
    <property type="entry name" value="RECBCD ENZYME SUBUNIT RECC"/>
    <property type="match status" value="1"/>
</dbReference>
<dbReference type="PANTHER" id="PTHR30591:SF1">
    <property type="entry name" value="RECBCD ENZYME SUBUNIT RECC"/>
    <property type="match status" value="1"/>
</dbReference>
<dbReference type="Pfam" id="PF21445">
    <property type="entry name" value="ADDB_N"/>
    <property type="match status" value="1"/>
</dbReference>
<dbReference type="Pfam" id="PF12705">
    <property type="entry name" value="PDDEXK_1"/>
    <property type="match status" value="1"/>
</dbReference>
<dbReference type="Pfam" id="PF13361">
    <property type="entry name" value="UvrD_C"/>
    <property type="match status" value="1"/>
</dbReference>
<dbReference type="SUPFAM" id="SSF52540">
    <property type="entry name" value="P-loop containing nucleoside triphosphate hydrolases"/>
    <property type="match status" value="1"/>
</dbReference>
<dbReference type="PROSITE" id="PS51198">
    <property type="entry name" value="UVRD_HELICASE_ATP_BIND"/>
    <property type="match status" value="1"/>
</dbReference>
<dbReference type="PROSITE" id="PS51217">
    <property type="entry name" value="UVRD_HELICASE_CTER"/>
    <property type="match status" value="1"/>
</dbReference>
<comment type="function">
    <text evidence="1">The heterodimer acts as both an ATP-dependent DNA helicase and an ATP-dependent, dual-direction single-stranded exonuclease. Recognizes the chi site generating a DNA molecule suitable for the initiation of homologous recombination. The AddB subunit has 5' -&gt; 3' nuclease activity but not helicase activity.</text>
</comment>
<comment type="cofactor">
    <cofactor evidence="1">
        <name>Mg(2+)</name>
        <dbReference type="ChEBI" id="CHEBI:18420"/>
    </cofactor>
</comment>
<comment type="cofactor">
    <cofactor evidence="1">
        <name>[4Fe-4S] cluster</name>
        <dbReference type="ChEBI" id="CHEBI:49883"/>
    </cofactor>
    <text evidence="1">Binds 1 [4Fe-4S] cluster.</text>
</comment>
<comment type="subunit">
    <text evidence="1">Heterodimer of AddA and AddB.</text>
</comment>
<comment type="miscellaneous">
    <text evidence="1">Despite having conserved helicase domains, this subunit does not have helicase activity.</text>
</comment>
<comment type="similarity">
    <text evidence="1">Belongs to the helicase family. AddB/RexB type 1 subfamily.</text>
</comment>
<reference key="1">
    <citation type="submission" date="2007-03" db="EMBL/GenBank/DDBJ databases">
        <title>Complete sequence of Desulfotomaculum reducens MI-1.</title>
        <authorList>
            <consortium name="US DOE Joint Genome Institute"/>
            <person name="Copeland A."/>
            <person name="Lucas S."/>
            <person name="Lapidus A."/>
            <person name="Barry K."/>
            <person name="Detter J.C."/>
            <person name="Glavina del Rio T."/>
            <person name="Hammon N."/>
            <person name="Israni S."/>
            <person name="Dalin E."/>
            <person name="Tice H."/>
            <person name="Pitluck S."/>
            <person name="Sims D."/>
            <person name="Brettin T."/>
            <person name="Bruce D."/>
            <person name="Han C."/>
            <person name="Tapia R."/>
            <person name="Schmutz J."/>
            <person name="Larimer F."/>
            <person name="Land M."/>
            <person name="Hauser L."/>
            <person name="Kyrpides N."/>
            <person name="Kim E."/>
            <person name="Tebo B.M."/>
            <person name="Richardson P."/>
        </authorList>
    </citation>
    <scope>NUCLEOTIDE SEQUENCE [LARGE SCALE GENOMIC DNA]</scope>
    <source>
        <strain>ATCC BAA-1160 / DSM 100696 / MI-1</strain>
    </source>
</reference>
<organism>
    <name type="scientific">Desulforamulus reducens (strain ATCC BAA-1160 / DSM 100696 / MI-1)</name>
    <name type="common">Desulfotomaculum reducens</name>
    <dbReference type="NCBI Taxonomy" id="349161"/>
    <lineage>
        <taxon>Bacteria</taxon>
        <taxon>Bacillati</taxon>
        <taxon>Bacillota</taxon>
        <taxon>Clostridia</taxon>
        <taxon>Eubacteriales</taxon>
        <taxon>Peptococcaceae</taxon>
        <taxon>Desulforamulus</taxon>
    </lineage>
</organism>
<evidence type="ECO:0000255" key="1">
    <source>
        <dbReference type="HAMAP-Rule" id="MF_01452"/>
    </source>
</evidence>
<feature type="chain" id="PRO_0000379189" description="ATP-dependent helicase/deoxyribonuclease subunit B">
    <location>
        <begin position="1"/>
        <end position="1155"/>
    </location>
</feature>
<feature type="domain" description="UvrD-like helicase ATP-binding" evidence="1">
    <location>
        <begin position="1"/>
        <end position="300"/>
    </location>
</feature>
<feature type="domain" description="UvrD-like helicase C-terminal" evidence="1">
    <location>
        <begin position="280"/>
        <end position="590"/>
    </location>
</feature>
<feature type="binding site" evidence="1">
    <location>
        <begin position="8"/>
        <end position="15"/>
    </location>
    <ligand>
        <name>ATP</name>
        <dbReference type="ChEBI" id="CHEBI:30616"/>
    </ligand>
</feature>
<feature type="binding site" evidence="1">
    <location>
        <position position="792"/>
    </location>
    <ligand>
        <name>[4Fe-4S] cluster</name>
        <dbReference type="ChEBI" id="CHEBI:49883"/>
    </ligand>
</feature>
<feature type="binding site" evidence="1">
    <location>
        <position position="1111"/>
    </location>
    <ligand>
        <name>[4Fe-4S] cluster</name>
        <dbReference type="ChEBI" id="CHEBI:49883"/>
    </ligand>
</feature>
<feature type="binding site" evidence="1">
    <location>
        <position position="1114"/>
    </location>
    <ligand>
        <name>[4Fe-4S] cluster</name>
        <dbReference type="ChEBI" id="CHEBI:49883"/>
    </ligand>
</feature>
<feature type="binding site" evidence="1">
    <location>
        <position position="1120"/>
    </location>
    <ligand>
        <name>[4Fe-4S] cluster</name>
        <dbReference type="ChEBI" id="CHEBI:49883"/>
    </ligand>
</feature>
<name>ADDB_DESRM</name>
<accession>A4J4E2</accession>
<gene>
    <name evidence="1" type="primary">addB</name>
    <name type="ordered locus">Dred_1415</name>
</gene>